<protein>
    <recommendedName>
        <fullName evidence="33">RNA-binding protein 20</fullName>
    </recommendedName>
    <alternativeName>
        <fullName evidence="33">RNA-binding motif protein 20</fullName>
    </alternativeName>
</protein>
<keyword id="KW-0122">Cardiomyopathy</keyword>
<keyword id="KW-0963">Cytoplasm</keyword>
<keyword id="KW-0225">Disease variant</keyword>
<keyword id="KW-0479">Metal-binding</keyword>
<keyword id="KW-0507">mRNA processing</keyword>
<keyword id="KW-0508">mRNA splicing</keyword>
<keyword id="KW-0539">Nucleus</keyword>
<keyword id="KW-0597">Phosphoprotein</keyword>
<keyword id="KW-1267">Proteomics identification</keyword>
<keyword id="KW-1185">Reference proteome</keyword>
<keyword id="KW-0694">RNA-binding</keyword>
<keyword id="KW-0862">Zinc</keyword>
<keyword id="KW-0863">Zinc-finger</keyword>
<sequence>MVLAAAMSQDADPSGPEQPDRVACSVPGARASPAPSGPRGMQQPPPPPQPPPPPQAGLPQIIQNAAKLLDKNPFSVSNPNPLLPSPASLQLAQLQAQLTLHRLKLAQTAVTNNTAAATVLNQVLSKVAMSQPLFNQLRHPSVITGPHGHAGVPQHAAAIPSTRFPSNAIAFSPPSQTRGPGPSMNLPNQPPSAMVMHPFTGVMPQTPGQPAVILGIGKTGPAPATAGFYEYGKASSGQTYGPETDGQPGFLPSSASTSGSVTYEGHYSHTGQDGQAAFSKDFYGPNSQGSHVASGFPAEQAGGLKSEVGPLLQGTNSQWESPHGFSGQSKPDLTAGPMWPPPHNQPYELYDPEEPTSDRTPPSFGGRLNNSKQGFIGAGRRAKEDQALLSVRPLQAHELNDFHGVAPLHLPHICSICDKKVFDLKDWELHVKGKLHAQKCLVFSENAGIRCILGSAEGTLCASPNSTAVYNPAGNEDYASNLGTSYVPIPARSFTQSSPTFPLASVGTTFAQRKGAGRVVHICNLPEGSCTENDVINLGLPFGKVTNYILMKSTNQAFLEMAYTEAAQAMVQYYQEKSAVINGEKLLIRMSKRYKELQLKKPGKAVAAIIQDIHSQRERDMFREADRYGPERPRSRSPVSRSLSPRSHTPSFTSCSSSHSPPGPSRADWGNGRDSWEHSPYARREEERDPAPWRDNGDDKRDRMDPWAHDRKHHPRQLDKAELDERPEGGRPHREKYPRSGSPNLPHSVSSYKSREDGYYRKEPKAKSDKYLKQQQDAPGRSRRKDEARLRESRHPHPDDSGKEDGLGPKVTRAPEGAKAKQNEKNKTKRTDRDQEGADDRKENTMAENEAGKEEQEGMEESPQSVGRQEKEAEFSDPENTRTKKEQDWESESEAEGESWYPTNMEELVTVDEVGEEEDFIVEPDIPELEEIVPIDQKDKICPETCLCVTTTLDLDLAQDFPKEGVKAVGNGAAEISLKSPRELPSASTSCPSDMDVEMPGLNLDAERKPAESETGLSLEDSDCYEKEAKGVESSDVHPAPTVQQMSSPKPAEERARQPSPFVDDCKTRGTPEDGACEGSPLEEKASPPIETDLQNQACQEVLTPENSRYVEMKSLEVRSPEYTEVELKQPLSLPSWEPEDVFSELSIPLGVEFVVPRTGFYCKLCGLFYTSEETAKMSHCRSAVHYRNLQKYLSQLAEEGLKETEGADSPRPEDSGIVPRFERKKL</sequence>
<comment type="function">
    <text evidence="1 11 14 15 16 17 18 22 24 30 31">RNA-binding protein that acts as a regulator of mRNA splicing of a subset of genes encoding key structural proteins involved in cardiac development, such as TTN (Titin), CACNA1C, CAMK2D or PDLIM5/ENH (PubMed:22466703, PubMed:24960161, PubMed:26604136, PubMed:27496873, PubMed:27531932, PubMed:29895960, PubMed:30948719, PubMed:32840935, PubMed:34732726, PubMed:35427468). Acts as a repressor of mRNA splicing: specifically binds the 5'UCUU-3' motif that is predominantly found within intronic sequences of pre-mRNAs, leading to the exclusion of specific exons in target transcripts (PubMed:24960161, PubMed:30948719, PubMed:34732726). RBM20-mediated exon skipping is hormone-dependent and is essential for TTN isoform transition in both cardiac and skeletal muscles (PubMed:27531932, PubMed:30948719). RBM20-mediated exon skipping of TTN provides substrates for the formation of circular RNA (circRNAs) from the TTN transcripts (PubMed:27531932, PubMed:34732726). Together with RBM24, promotes the expression of short isoforms of PDLIM5/ENH in cardiomyocytes (By similarity).</text>
</comment>
<comment type="subunit">
    <text evidence="14">Associates with components of the U1 and U2 U1 small nuclear ribonucleoprotein complexes.</text>
</comment>
<comment type="interaction">
    <interactant intactId="EBI-11352885">
        <id>Q5T481</id>
    </interactant>
    <interactant intactId="EBI-739832">
        <id>Q8TBB1</id>
        <label>LNX1</label>
    </interactant>
    <organismsDiffer>false</organismsDiffer>
    <experiments>3</experiments>
</comment>
<comment type="interaction">
    <interactant intactId="EBI-11352885">
        <id>Q5T481</id>
    </interactant>
    <interactant intactId="EBI-741158">
        <id>Q96HA8</id>
        <label>NTAQ1</label>
    </interactant>
    <organismsDiffer>false</organismsDiffer>
    <experiments>3</experiments>
</comment>
<comment type="subcellular location">
    <subcellularLocation>
        <location evidence="4 13 19 24 26 30 31">Nucleus</location>
    </subcellularLocation>
    <subcellularLocation>
        <location evidence="26 30 31">Cytoplasm</location>
        <location evidence="26 30 31">Cytoplasmic ribonucleoprotein granule</location>
    </subcellularLocation>
    <text evidence="26 30 31">The active form that regulates alternative splicing localizes to the nucleus (PubMed:33188278, PubMed:34732726, PubMed:35427468). Also localizes to cytoplasmic ribonucleoprotein granules; localization to cytoplasmic ribonucleoprotein granules plays an important regulatory role (PubMed:33188278, PubMed:34732726, PubMed:35427468). Subcellular localization is regulated by phosphorylation of different parts of the protein: while phosphorylation of the RS (arginine/serine-rich) region promotes nuclear localization, phosphorylation of the C-terminal disordered region promotes localization to cytoplasmic ribonucleoprotein granules (PubMed:35427468).</text>
</comment>
<comment type="tissue specificity">
    <text evidence="7 13">Mainly expressed in the heart (PubMed:19712804, PubMed:23886709). Also expressed in skeletal muscle tissues, ovary, small intestine and colon (PubMed:23886709).</text>
</comment>
<comment type="PTM">
    <text evidence="31">Phosphorylation regulates the subcellular localization (PubMed:35427468). Phosphorylation of Ser-635 and Ser-637 in the RS (arginine/serine-rich) region promotes nuclear localization of the protein (PubMed:35427468). In contrast, phosphorylation of the C-terminal disordered region promotes localization to cytoplasmic ribonucleoprotein granules (PubMed:35427468).</text>
</comment>
<comment type="disease" evidence="7 8 9 10 11 12 15 16 18 19 20 21 23 24 26 27 28 29 30 31">
    <disease id="DI-02568">
        <name>Cardiomyopathy, dilated, 1DD</name>
        <acronym>CMD1DD</acronym>
        <description>A disorder characterized by ventricular dilation and impaired systolic function, resulting in congestive heart failure and arrhythmia. Patients are at risk of premature death.</description>
        <dbReference type="MIM" id="613172"/>
    </disease>
    <text>The disease is caused by variants affecting the gene represented in this entry.</text>
</comment>
<comment type="disease">
    <text evidence="25">Left ventricular non-compaction (LVNCX): A form of left ventricular non-compaction, a cardiomyopathy due to myocardial morphogenesis arrest and characterized by a hypertrophic left ventricle, a severely thickened 2-layered myocardium, numerous prominent trabeculations, deep intertrabecular recesses, and poor systolic function. Clinical manifestations are variable. Some affected individuals experience no symptoms at all, others develop heart failure. In some cases, left ventricular non-compaction is associated with other congenital heart anomalies. The disease is caused by variants affecting the gene represented in this entry.</text>
</comment>
<dbReference type="EMBL" id="EU822950">
    <property type="protein sequence ID" value="ACF49364.1"/>
    <property type="molecule type" value="mRNA"/>
</dbReference>
<dbReference type="EMBL" id="AL136368">
    <property type="status" value="NOT_ANNOTATED_CDS"/>
    <property type="molecule type" value="Genomic_DNA"/>
</dbReference>
<dbReference type="EMBL" id="AL359260">
    <property type="status" value="NOT_ANNOTATED_CDS"/>
    <property type="molecule type" value="Genomic_DNA"/>
</dbReference>
<dbReference type="CCDS" id="CCDS44477.1"/>
<dbReference type="RefSeq" id="NP_001127835.2">
    <property type="nucleotide sequence ID" value="NM_001134363.3"/>
</dbReference>
<dbReference type="SMR" id="Q5T481"/>
<dbReference type="BioGRID" id="129433">
    <property type="interactions" value="41"/>
</dbReference>
<dbReference type="FunCoup" id="Q5T481">
    <property type="interactions" value="1191"/>
</dbReference>
<dbReference type="IntAct" id="Q5T481">
    <property type="interactions" value="11"/>
</dbReference>
<dbReference type="MINT" id="Q5T481"/>
<dbReference type="STRING" id="9606.ENSP00000358532"/>
<dbReference type="GlyGen" id="Q5T481">
    <property type="glycosylation" value="3 sites, 1 O-linked glycan (2 sites)"/>
</dbReference>
<dbReference type="iPTMnet" id="Q5T481"/>
<dbReference type="PhosphoSitePlus" id="Q5T481"/>
<dbReference type="BioMuta" id="RBM20"/>
<dbReference type="DMDM" id="317373512"/>
<dbReference type="jPOST" id="Q5T481"/>
<dbReference type="MassIVE" id="Q5T481"/>
<dbReference type="PaxDb" id="9606-ENSP00000358532"/>
<dbReference type="PeptideAtlas" id="Q5T481"/>
<dbReference type="ProteomicsDB" id="64438"/>
<dbReference type="Pumba" id="Q5T481"/>
<dbReference type="Antibodypedia" id="50051">
    <property type="antibodies" value="98 antibodies from 21 providers"/>
</dbReference>
<dbReference type="DNASU" id="282996"/>
<dbReference type="Ensembl" id="ENST00000369519.4">
    <property type="protein sequence ID" value="ENSP00000358532.3"/>
    <property type="gene ID" value="ENSG00000203867.9"/>
</dbReference>
<dbReference type="Ensembl" id="ENST00000718239.1">
    <property type="protein sequence ID" value="ENSP00000520684.1"/>
    <property type="gene ID" value="ENSG00000203867.9"/>
</dbReference>
<dbReference type="GeneID" id="282996"/>
<dbReference type="KEGG" id="hsa:282996"/>
<dbReference type="MANE-Select" id="ENST00000369519.4">
    <property type="protein sequence ID" value="ENSP00000358532.3"/>
    <property type="RefSeq nucleotide sequence ID" value="NM_001134363.3"/>
    <property type="RefSeq protein sequence ID" value="NP_001127835.2"/>
</dbReference>
<dbReference type="UCSC" id="uc001kzf.2">
    <property type="organism name" value="human"/>
</dbReference>
<dbReference type="AGR" id="HGNC:27424"/>
<dbReference type="CTD" id="282996"/>
<dbReference type="DisGeNET" id="282996"/>
<dbReference type="GeneCards" id="RBM20"/>
<dbReference type="GeneReviews" id="RBM20"/>
<dbReference type="HGNC" id="HGNC:27424">
    <property type="gene designation" value="RBM20"/>
</dbReference>
<dbReference type="HPA" id="ENSG00000203867">
    <property type="expression patterns" value="Tissue enhanced (heart muscle, pancreas)"/>
</dbReference>
<dbReference type="MalaCards" id="RBM20"/>
<dbReference type="MIM" id="613171">
    <property type="type" value="gene"/>
</dbReference>
<dbReference type="MIM" id="613172">
    <property type="type" value="phenotype"/>
</dbReference>
<dbReference type="neXtProt" id="NX_Q5T481"/>
<dbReference type="OpenTargets" id="ENSG00000203867"/>
<dbReference type="Orphanet" id="154">
    <property type="disease" value="Familial isolated dilated cardiomyopathy"/>
</dbReference>
<dbReference type="PharmGKB" id="PA134934622"/>
<dbReference type="VEuPathDB" id="HostDB:ENSG00000203867"/>
<dbReference type="eggNOG" id="ENOG502QW62">
    <property type="taxonomic scope" value="Eukaryota"/>
</dbReference>
<dbReference type="GeneTree" id="ENSGT01030000234642"/>
<dbReference type="HOGENOM" id="CLU_007364_0_0_1"/>
<dbReference type="InParanoid" id="Q5T481"/>
<dbReference type="OMA" id="PTRADWG"/>
<dbReference type="OrthoDB" id="8949749at2759"/>
<dbReference type="PAN-GO" id="Q5T481">
    <property type="GO annotations" value="3 GO annotations based on evolutionary models"/>
</dbReference>
<dbReference type="PhylomeDB" id="Q5T481"/>
<dbReference type="TreeFam" id="TF333921"/>
<dbReference type="PathwayCommons" id="Q5T481"/>
<dbReference type="SignaLink" id="Q5T481"/>
<dbReference type="BioGRID-ORCS" id="282996">
    <property type="hits" value="10 hits in 1152 CRISPR screens"/>
</dbReference>
<dbReference type="CD-CODE" id="DEE660B4">
    <property type="entry name" value="Stress granule"/>
</dbReference>
<dbReference type="ChiTaRS" id="RBM20">
    <property type="organism name" value="human"/>
</dbReference>
<dbReference type="GenomeRNAi" id="282996"/>
<dbReference type="Pharos" id="Q5T481">
    <property type="development level" value="Tbio"/>
</dbReference>
<dbReference type="PRO" id="PR:Q5T481"/>
<dbReference type="Proteomes" id="UP000005640">
    <property type="component" value="Chromosome 10"/>
</dbReference>
<dbReference type="RNAct" id="Q5T481">
    <property type="molecule type" value="protein"/>
</dbReference>
<dbReference type="Bgee" id="ENSG00000203867">
    <property type="expression patterns" value="Expressed in left ventricle myocardium and 129 other cell types or tissues"/>
</dbReference>
<dbReference type="GO" id="GO:0036464">
    <property type="term" value="C:cytoplasmic ribonucleoprotein granule"/>
    <property type="evidence" value="ECO:0000314"/>
    <property type="project" value="UniProtKB"/>
</dbReference>
<dbReference type="GO" id="GO:0005634">
    <property type="term" value="C:nucleus"/>
    <property type="evidence" value="ECO:0000314"/>
    <property type="project" value="UniProtKB"/>
</dbReference>
<dbReference type="GO" id="GO:0003729">
    <property type="term" value="F:mRNA binding"/>
    <property type="evidence" value="ECO:0000318"/>
    <property type="project" value="GO_Central"/>
</dbReference>
<dbReference type="GO" id="GO:0097157">
    <property type="term" value="F:pre-mRNA intronic binding"/>
    <property type="evidence" value="ECO:0000314"/>
    <property type="project" value="UniProtKB"/>
</dbReference>
<dbReference type="GO" id="GO:0003723">
    <property type="term" value="F:RNA binding"/>
    <property type="evidence" value="ECO:0000250"/>
    <property type="project" value="UniProtKB"/>
</dbReference>
<dbReference type="GO" id="GO:1990935">
    <property type="term" value="F:splicing factor binding"/>
    <property type="evidence" value="ECO:0000314"/>
    <property type="project" value="UniProtKB"/>
</dbReference>
<dbReference type="GO" id="GO:0008270">
    <property type="term" value="F:zinc ion binding"/>
    <property type="evidence" value="ECO:0007669"/>
    <property type="project" value="UniProtKB-KW"/>
</dbReference>
<dbReference type="GO" id="GO:0060914">
    <property type="term" value="P:heart formation"/>
    <property type="evidence" value="ECO:0000314"/>
    <property type="project" value="UniProtKB"/>
</dbReference>
<dbReference type="GO" id="GO:0048025">
    <property type="term" value="P:negative regulation of mRNA splicing, via spliceosome"/>
    <property type="evidence" value="ECO:0000314"/>
    <property type="project" value="UniProtKB"/>
</dbReference>
<dbReference type="GO" id="GO:0033120">
    <property type="term" value="P:positive regulation of RNA splicing"/>
    <property type="evidence" value="ECO:0000315"/>
    <property type="project" value="UniProtKB"/>
</dbReference>
<dbReference type="GO" id="GO:0000381">
    <property type="term" value="P:regulation of alternative mRNA splicing, via spliceosome"/>
    <property type="evidence" value="ECO:0007669"/>
    <property type="project" value="Ensembl"/>
</dbReference>
<dbReference type="GO" id="GO:0048024">
    <property type="term" value="P:regulation of mRNA splicing, via spliceosome"/>
    <property type="evidence" value="ECO:0000314"/>
    <property type="project" value="UniProtKB"/>
</dbReference>
<dbReference type="GO" id="GO:0043484">
    <property type="term" value="P:regulation of RNA splicing"/>
    <property type="evidence" value="ECO:0000318"/>
    <property type="project" value="GO_Central"/>
</dbReference>
<dbReference type="GO" id="GO:0160091">
    <property type="term" value="P:spliceosome-depend formation of circular RNA"/>
    <property type="evidence" value="ECO:0000314"/>
    <property type="project" value="UniProtKB"/>
</dbReference>
<dbReference type="CDD" id="cd12685">
    <property type="entry name" value="RRM_RBM20"/>
    <property type="match status" value="1"/>
</dbReference>
<dbReference type="FunFam" id="3.30.70.330:FF:000270">
    <property type="entry name" value="RNA binding motif protein 20"/>
    <property type="match status" value="1"/>
</dbReference>
<dbReference type="Gene3D" id="3.30.70.330">
    <property type="match status" value="1"/>
</dbReference>
<dbReference type="InterPro" id="IPR000690">
    <property type="entry name" value="Matrin/U1-C_Znf_C2H2"/>
</dbReference>
<dbReference type="InterPro" id="IPR003604">
    <property type="entry name" value="Matrin/U1-like-C_Znf_C2H2"/>
</dbReference>
<dbReference type="InterPro" id="IPR012677">
    <property type="entry name" value="Nucleotide-bd_a/b_plait_sf"/>
</dbReference>
<dbReference type="InterPro" id="IPR035979">
    <property type="entry name" value="RBD_domain_sf"/>
</dbReference>
<dbReference type="InterPro" id="IPR034790">
    <property type="entry name" value="RBM20_RRM"/>
</dbReference>
<dbReference type="InterPro" id="IPR000504">
    <property type="entry name" value="RRM_dom"/>
</dbReference>
<dbReference type="PANTHER" id="PTHR15592">
    <property type="entry name" value="MATRIN 3/NUCLEAR PROTEIN 220-RELATED"/>
    <property type="match status" value="1"/>
</dbReference>
<dbReference type="SMART" id="SM00360">
    <property type="entry name" value="RRM"/>
    <property type="match status" value="1"/>
</dbReference>
<dbReference type="SMART" id="SM00451">
    <property type="entry name" value="ZnF_U1"/>
    <property type="match status" value="2"/>
</dbReference>
<dbReference type="SUPFAM" id="SSF54928">
    <property type="entry name" value="RNA-binding domain, RBD"/>
    <property type="match status" value="1"/>
</dbReference>
<dbReference type="PROSITE" id="PS50102">
    <property type="entry name" value="RRM"/>
    <property type="match status" value="1"/>
</dbReference>
<dbReference type="PROSITE" id="PS50171">
    <property type="entry name" value="ZF_MATRIN"/>
    <property type="match status" value="1"/>
</dbReference>
<organism>
    <name type="scientific">Homo sapiens</name>
    <name type="common">Human</name>
    <dbReference type="NCBI Taxonomy" id="9606"/>
    <lineage>
        <taxon>Eukaryota</taxon>
        <taxon>Metazoa</taxon>
        <taxon>Chordata</taxon>
        <taxon>Craniata</taxon>
        <taxon>Vertebrata</taxon>
        <taxon>Euteleostomi</taxon>
        <taxon>Mammalia</taxon>
        <taxon>Eutheria</taxon>
        <taxon>Euarchontoglires</taxon>
        <taxon>Primates</taxon>
        <taxon>Haplorrhini</taxon>
        <taxon>Catarrhini</taxon>
        <taxon>Hominidae</taxon>
        <taxon>Homo</taxon>
    </lineage>
</organism>
<proteinExistence type="evidence at protein level"/>
<accession>Q5T481</accession>
<accession>A6NIP5</accession>
<accession>B5A868</accession>
<accession>Q5JVI1</accession>
<evidence type="ECO:0000250" key="1">
    <source>
        <dbReference type="UniProtKB" id="E9PT37"/>
    </source>
</evidence>
<evidence type="ECO:0000250" key="2">
    <source>
        <dbReference type="UniProtKB" id="Q3UQS8"/>
    </source>
</evidence>
<evidence type="ECO:0000255" key="3"/>
<evidence type="ECO:0000255" key="4">
    <source>
        <dbReference type="PROSITE-ProRule" id="PRU00130"/>
    </source>
</evidence>
<evidence type="ECO:0000255" key="5">
    <source>
        <dbReference type="PROSITE-ProRule" id="PRU00176"/>
    </source>
</evidence>
<evidence type="ECO:0000256" key="6">
    <source>
        <dbReference type="SAM" id="MobiDB-lite"/>
    </source>
</evidence>
<evidence type="ECO:0000269" key="7">
    <source>
    </source>
</evidence>
<evidence type="ECO:0000269" key="8">
    <source>
    </source>
</evidence>
<evidence type="ECO:0000269" key="9">
    <source>
    </source>
</evidence>
<evidence type="ECO:0000269" key="10">
    <source>
    </source>
</evidence>
<evidence type="ECO:0000269" key="11">
    <source>
    </source>
</evidence>
<evidence type="ECO:0000269" key="12">
    <source>
    </source>
</evidence>
<evidence type="ECO:0000269" key="13">
    <source>
    </source>
</evidence>
<evidence type="ECO:0000269" key="14">
    <source>
    </source>
</evidence>
<evidence type="ECO:0000269" key="15">
    <source>
    </source>
</evidence>
<evidence type="ECO:0000269" key="16">
    <source>
    </source>
</evidence>
<evidence type="ECO:0000269" key="17">
    <source>
    </source>
</evidence>
<evidence type="ECO:0000269" key="18">
    <source>
    </source>
</evidence>
<evidence type="ECO:0000269" key="19">
    <source>
    </source>
</evidence>
<evidence type="ECO:0000269" key="20">
    <source>
    </source>
</evidence>
<evidence type="ECO:0000269" key="21">
    <source>
    </source>
</evidence>
<evidence type="ECO:0000269" key="22">
    <source>
    </source>
</evidence>
<evidence type="ECO:0000269" key="23">
    <source>
    </source>
</evidence>
<evidence type="ECO:0000269" key="24">
    <source>
    </source>
</evidence>
<evidence type="ECO:0000269" key="25">
    <source>
    </source>
</evidence>
<evidence type="ECO:0000269" key="26">
    <source>
    </source>
</evidence>
<evidence type="ECO:0000269" key="27">
    <source>
    </source>
</evidence>
<evidence type="ECO:0000269" key="28">
    <source>
    </source>
</evidence>
<evidence type="ECO:0000269" key="29">
    <source>
    </source>
</evidence>
<evidence type="ECO:0000269" key="30">
    <source>
    </source>
</evidence>
<evidence type="ECO:0000269" key="31">
    <source>
    </source>
</evidence>
<evidence type="ECO:0000303" key="32">
    <source>
    </source>
</evidence>
<evidence type="ECO:0000305" key="33"/>
<evidence type="ECO:0000305" key="34">
    <source>
    </source>
</evidence>
<evidence type="ECO:0000312" key="35">
    <source>
        <dbReference type="HGNC" id="HGNC:27424"/>
    </source>
</evidence>
<evidence type="ECO:0007744" key="36">
    <source>
    </source>
</evidence>
<gene>
    <name evidence="32 35" type="primary">RBM20</name>
</gene>
<name>RBM20_HUMAN</name>
<feature type="chain" id="PRO_0000328824" description="RNA-binding protein 20">
    <location>
        <begin position="1"/>
        <end position="1227"/>
    </location>
</feature>
<feature type="domain" description="RRM" evidence="5">
    <location>
        <begin position="518"/>
        <end position="593"/>
    </location>
</feature>
<feature type="zinc finger region" description="U1-type" evidence="3">
    <location>
        <begin position="409"/>
        <end position="443"/>
    </location>
</feature>
<feature type="zinc finger region" description="Matrin-type" evidence="4">
    <location>
        <begin position="1161"/>
        <end position="1192"/>
    </location>
</feature>
<feature type="region of interest" description="Disordered" evidence="6">
    <location>
        <begin position="1"/>
        <end position="58"/>
    </location>
</feature>
<feature type="region of interest" description="Disordered" evidence="6">
    <location>
        <begin position="289"/>
        <end position="374"/>
    </location>
</feature>
<feature type="region of interest" description="Disordered" evidence="6">
    <location>
        <begin position="624"/>
        <end position="906"/>
    </location>
</feature>
<feature type="region of interest" description="RS" evidence="34">
    <location>
        <begin position="628"/>
        <end position="655"/>
    </location>
</feature>
<feature type="region of interest" description="Disordered" evidence="6">
    <location>
        <begin position="977"/>
        <end position="1089"/>
    </location>
</feature>
<feature type="region of interest" description="Disordered" evidence="6">
    <location>
        <begin position="1201"/>
        <end position="1227"/>
    </location>
</feature>
<feature type="compositionally biased region" description="Low complexity" evidence="6">
    <location>
        <begin position="27"/>
        <end position="42"/>
    </location>
</feature>
<feature type="compositionally biased region" description="Pro residues" evidence="6">
    <location>
        <begin position="43"/>
        <end position="56"/>
    </location>
</feature>
<feature type="compositionally biased region" description="Polar residues" evidence="6">
    <location>
        <begin position="313"/>
        <end position="331"/>
    </location>
</feature>
<feature type="compositionally biased region" description="Basic and acidic residues" evidence="6">
    <location>
        <begin position="624"/>
        <end position="634"/>
    </location>
</feature>
<feature type="compositionally biased region" description="Low complexity" evidence="6">
    <location>
        <begin position="636"/>
        <end position="660"/>
    </location>
</feature>
<feature type="compositionally biased region" description="Basic and acidic residues" evidence="6">
    <location>
        <begin position="674"/>
        <end position="709"/>
    </location>
</feature>
<feature type="compositionally biased region" description="Basic and acidic residues" evidence="6">
    <location>
        <begin position="716"/>
        <end position="738"/>
    </location>
</feature>
<feature type="compositionally biased region" description="Polar residues" evidence="6">
    <location>
        <begin position="741"/>
        <end position="752"/>
    </location>
</feature>
<feature type="compositionally biased region" description="Basic and acidic residues" evidence="6">
    <location>
        <begin position="753"/>
        <end position="772"/>
    </location>
</feature>
<feature type="compositionally biased region" description="Basic and acidic residues" evidence="6">
    <location>
        <begin position="784"/>
        <end position="807"/>
    </location>
</feature>
<feature type="compositionally biased region" description="Basic and acidic residues" evidence="6">
    <location>
        <begin position="816"/>
        <end position="856"/>
    </location>
</feature>
<feature type="compositionally biased region" description="Basic and acidic residues" evidence="6">
    <location>
        <begin position="868"/>
        <end position="888"/>
    </location>
</feature>
<feature type="compositionally biased region" description="Basic and acidic residues" evidence="6">
    <location>
        <begin position="1024"/>
        <end position="1036"/>
    </location>
</feature>
<feature type="compositionally biased region" description="Basic and acidic residues" evidence="6">
    <location>
        <begin position="1201"/>
        <end position="1215"/>
    </location>
</feature>
<feature type="modified residue" description="Phosphoserine" evidence="36">
    <location>
        <position position="498"/>
    </location>
</feature>
<feature type="modified residue" description="Phosphoserine" evidence="31">
    <location>
        <position position="635"/>
    </location>
</feature>
<feature type="modified residue" description="Phosphoserine" evidence="2">
    <location>
        <position position="637"/>
    </location>
</feature>
<feature type="modified residue" description="Phosphoserine" evidence="1">
    <location>
        <position position="640"/>
    </location>
</feature>
<feature type="modified residue" description="Phosphoserine" evidence="1">
    <location>
        <position position="642"/>
    </location>
</feature>
<feature type="modified residue" description="Phosphoserine" evidence="31">
    <location>
        <position position="660"/>
    </location>
</feature>
<feature type="modified residue" description="Phosphoserine" evidence="31 36">
    <location>
        <position position="679"/>
    </location>
</feature>
<feature type="modified residue" description="Phosphoserine" evidence="31">
    <location>
        <position position="742"/>
    </location>
</feature>
<feature type="modified residue" description="Phosphoserine" evidence="36">
    <location>
        <position position="801"/>
    </location>
</feature>
<feature type="modified residue" description="Phosphoserine" evidence="31">
    <location>
        <position position="865"/>
    </location>
</feature>
<feature type="modified residue" description="Phosphoserine" evidence="31 36">
    <location>
        <position position="876"/>
    </location>
</feature>
<feature type="modified residue" description="Phosphoserine" evidence="1">
    <location>
        <position position="891"/>
    </location>
</feature>
<feature type="modified residue" description="Phosphoserine" evidence="1">
    <location>
        <position position="893"/>
    </location>
</feature>
<feature type="modified residue" description="Phosphoserine" evidence="1">
    <location>
        <position position="977"/>
    </location>
</feature>
<feature type="modified residue" description="Phosphoserine" evidence="31 36">
    <location>
        <position position="980"/>
    </location>
</feature>
<feature type="modified residue" description="Phosphoserine" evidence="1">
    <location>
        <position position="1013"/>
    </location>
</feature>
<feature type="modified residue" description="Phosphoserine" evidence="2">
    <location>
        <position position="1048"/>
    </location>
</feature>
<feature type="modified residue" description="Phosphoserine" evidence="31 36">
    <location>
        <position position="1060"/>
    </location>
</feature>
<feature type="modified residue" description="Phosphoserine" evidence="31">
    <location>
        <position position="1080"/>
    </location>
</feature>
<feature type="modified residue" description="Phosphoserine" evidence="1">
    <location>
        <position position="1115"/>
    </location>
</feature>
<feature type="modified residue" description="Phosphoserine" evidence="31">
    <location>
        <position position="1120"/>
    </location>
</feature>
<feature type="modified residue" description="Phosphoserine" evidence="31">
    <location>
        <position position="1210"/>
    </location>
</feature>
<feature type="sequence variant" id="VAR_086515" description="In CMD1DD; uncertain significance; dbSNP:rs2134793204." evidence="28">
    <original>P</original>
    <variation>T</variation>
    <location>
        <position position="52"/>
    </location>
</feature>
<feature type="sequence variant" id="VAR_086516" description="In CMD1DD; uncertain significance; dbSNP:rs536357058." evidence="10">
    <original>L</original>
    <variation>I</variation>
    <location>
        <position position="83"/>
    </location>
</feature>
<feature type="sequence variant" id="VAR_042532" description="In dbSNP:rs7908490.">
    <original>P</original>
    <variation>T</variation>
    <location>
        <position position="173"/>
    </location>
</feature>
<feature type="sequence variant" id="VAR_086517" description="In CMD1DD; uncertain significance; dbSNP:rs397516621." evidence="28">
    <original>T</original>
    <variation>S</variation>
    <location>
        <position position="177"/>
    </location>
</feature>
<feature type="sequence variant" id="VAR_086518" description="In CMD1DD; uncertain significance." evidence="28">
    <original>M</original>
    <variation>L</variation>
    <location>
        <position position="194"/>
    </location>
</feature>
<feature type="sequence variant" id="VAR_086519" description="In CMD1DD; uncertain significance." evidence="20">
    <original>M</original>
    <variation>V</variation>
    <location>
        <position position="196"/>
    </location>
</feature>
<feature type="sequence variant" id="VAR_086520" description="In CMD1DD; uncertain significance; dbSNP:rs940901720." evidence="28">
    <original>G</original>
    <variation>V</variation>
    <location>
        <position position="259"/>
    </location>
</feature>
<feature type="sequence variant" id="VAR_086521" description="In CMD1DD; uncertain significance; dbSNP:rs771764951." evidence="20">
    <original>R</original>
    <variation>W</variation>
    <location>
        <position position="392"/>
    </location>
</feature>
<feature type="sequence variant" id="VAR_086522" description="In CMD1DD; uncertain significance; dbSNP:rs189569984." evidence="10">
    <original>S</original>
    <variation>L</variation>
    <location>
        <position position="455"/>
    </location>
</feature>
<feature type="sequence variant" id="VAR_068802" description="In CMD1DD; dbSNP:rs183007628." evidence="8 21">
    <original>V</original>
    <variation>I</variation>
    <location>
        <position position="535"/>
    </location>
</feature>
<feature type="sequence variant" id="VAR_086523" description="In CMD1DD; dbSNP:rs2135078982." evidence="28">
    <original>Q</original>
    <variation>P</variation>
    <location>
        <position position="598"/>
    </location>
</feature>
<feature type="sequence variant" id="VAR_063092" description="In CMD1DD; dbSNP:rs267607001." evidence="7 8 20">
    <original>R</original>
    <variation>Q</variation>
    <location>
        <position position="634"/>
    </location>
</feature>
<feature type="sequence variant" id="VAR_068803" description="In CMD1DD; impaired mRNA splicing of TTN (Titin) mRNA; dbSNP:rs796734066." evidence="8 18 27 29">
    <original>R</original>
    <variation>W</variation>
    <location>
        <position position="634"/>
    </location>
</feature>
<feature type="sequence variant" id="VAR_068804" description="In CMD1DD; causes the formation of anomalous isoforms in TTN (Titin); impaired localization to the nucleus, leading to mislocalization to the cytoplasm." evidence="11 31">
    <original>S</original>
    <variation>A</variation>
    <location>
        <position position="635"/>
    </location>
</feature>
<feature type="sequence variant" id="VAR_068805" description="In CMD1DD; impaired localization to the nucleus, leading to mislocalization to the cytoplasm; dbSNP:rs267607002." evidence="8 19">
    <original>R</original>
    <variation>C</variation>
    <location>
        <position position="636"/>
    </location>
</feature>
<feature type="sequence variant" id="VAR_063093" description="In CMD1DD; also found in patients with left ventricular non-compaction; dbSNP:rs267607004." evidence="7 8 12 20 25">
    <original>R</original>
    <variation>H</variation>
    <location>
        <position position="636"/>
    </location>
</feature>
<feature type="sequence variant" id="VAR_063094" description="In CMD1DD; impaired splicing of target mRNAs, such as TTN, CAMK2D and CACNA1C; decreased localization to the nucleus associated with relocalization to P-body and stress granules; dbSNP:rs267607002." evidence="7 15 20 26 30">
    <original>R</original>
    <variation>S</variation>
    <location>
        <position position="636"/>
    </location>
</feature>
<feature type="sequence variant" id="VAR_063095" description="In CMD1DD; also found in patients with left ventricular non-compaction; dbSNP:rs267607005." evidence="7 9 25">
    <original>S</original>
    <variation>G</variation>
    <location>
        <position position="637"/>
    </location>
</feature>
<feature type="sequence variant" id="VAR_063096" description="In CMD1DD; impaired localization to the nucleus, leading to mislocalization to the cytoplasm; dbSNP:rs267607003." evidence="7 10 20 24">
    <original>P</original>
    <variation>L</variation>
    <location>
        <position position="638"/>
    </location>
</feature>
<feature type="sequence variant" id="VAR_086524" description="In CMD1DD; uncertain significance; dbSNP:rs1475557145." evidence="20">
    <original>D</original>
    <variation>G</variation>
    <location>
        <position position="674"/>
    </location>
</feature>
<feature type="sequence variant" id="VAR_068806" description="In CMD1DD; dbSNP:rs375798246." evidence="8 21">
    <original>R</original>
    <variation>Q</variation>
    <location>
        <position position="716"/>
    </location>
</feature>
<feature type="sequence variant" id="VAR_042533" description="In dbSNP:rs1417635.">
    <original>S</original>
    <variation>W</variation>
    <location>
        <position position="768"/>
    </location>
</feature>
<feature type="sequence variant" id="VAR_086525" description="In CMD1DD; uncertain significance; dbSNP:rs201370621." evidence="10">
    <original>D</original>
    <variation>N</variation>
    <location>
        <position position="888"/>
    </location>
</feature>
<feature type="sequence variant" id="VAR_086526" description="In CMD1DD; uncertain significance; dbSNP:rs1564664312." evidence="23">
    <original>M</original>
    <variation>K</variation>
    <location>
        <position position="905"/>
    </location>
</feature>
<feature type="sequence variant" id="VAR_086527" description="In CMD1DD; decreased stability; impaired mRNA splicing of target mRNAs; dbSNP:rs397516607." evidence="16 20">
    <original>E</original>
    <variation>K</variation>
    <location>
        <position position="913"/>
    </location>
</feature>
<feature type="sequence variant" id="VAR_086528" description="In CMD1DD; impaired mRNA splicing of target mRNAs; does not affect nuclear localization; dbSNP:rs794729154." evidence="24">
    <original>V</original>
    <variation>A</variation>
    <location>
        <position position="914"/>
    </location>
</feature>
<feature type="sequence variant" id="VAR_086529" description="In CMD1DD; impaired mRNA splicing of TTN (Titin) mRNA." evidence="10 18">
    <location>
        <begin position="1031"/>
        <end position="1227"/>
    </location>
</feature>
<feature type="sequence variant" id="VAR_086530" description="In CMD1DD; uncertain significance; dbSNP:rs727503392." evidence="20">
    <original>P</original>
    <variation>S</variation>
    <location>
        <position position="1039"/>
    </location>
</feature>
<feature type="sequence variant" id="VAR_086531" description="In CMD1DD; uncertain significance; dbSNP:rs199830512." evidence="28">
    <original>R</original>
    <variation>W</variation>
    <location>
        <position position="1057"/>
    </location>
</feature>
<feature type="sequence variant" id="VAR_086532" description="In CMD1DD; uncertain significance; dbSNP:rs1268330519." evidence="10">
    <original>P</original>
    <variation>R</variation>
    <location>
        <position position="1081"/>
    </location>
</feature>
<feature type="sequence variant" id="VAR_086533" description="In CMD1DD; uncertain significance; dbSNP:rs757389650." evidence="10">
    <original>E</original>
    <variation>K</variation>
    <location>
        <position position="1206"/>
    </location>
</feature>
<feature type="mutagenesis site" description="In A10 mutant; does not affect nuclear localization; when associated with A-679; A-685; A-742; A-876; A-980; A-1060; A-1080; A-1120 and A-1210." evidence="31">
    <original>S</original>
    <variation>A</variation>
    <location>
        <position position="660"/>
    </location>
</feature>
<feature type="mutagenesis site" description="In D10 mutant; mimics phosphorylation; does not prevent nuclear localization but induces increased localization to cytoplasmic ribonucleoprotein granules; when associated with D-679, D-685, D-742, D-876, D-980, D-1060, D-1080, D-1120 and D-1210." evidence="31">
    <original>S</original>
    <variation>D</variation>
    <location>
        <position position="660"/>
    </location>
</feature>
<feature type="mutagenesis site" description="In A10 mutant; does not affect nuclear localization; when associated with A-660; A-685; A-742; A-876; A-980; A-1060; A-1080; A-1120 and A-1210." evidence="31">
    <original>S</original>
    <variation>A</variation>
    <location>
        <position position="679"/>
    </location>
</feature>
<feature type="mutagenesis site" description="In D10 mutant; mimics phosphorylation; does not prevent nuclear localization but induces increased localization to cytoplasmic ribonucleoprotein granules; when associated with D-660, D-685, D-742, D-876, D-980, D-1060, D-1080, D-1120 and D-1210." evidence="31">
    <original>S</original>
    <variation>D</variation>
    <location>
        <position position="679"/>
    </location>
</feature>
<feature type="mutagenesis site" description="In A10 mutant; does not affect nuclear localization; when associated with A-660; A-679; A-742; A-876; A-980; A-1060; A-1080; A-1120 and A-1210." evidence="31">
    <original>E</original>
    <variation>A</variation>
    <location>
        <position position="685"/>
    </location>
</feature>
<feature type="mutagenesis site" description="In D10 mutant; mimics phosphorylation; does not prevent nuclear localization but induces increased localization to cytoplasmic ribonucleoprotein granules; when associated with D-660, D-679, D-742, D-876, D-980, D-1060, D-1080, D-1120 and D-1210." evidence="31">
    <original>E</original>
    <variation>D</variation>
    <location>
        <position position="685"/>
    </location>
</feature>
<feature type="mutagenesis site" description="In A10 mutant; does not affect nuclear localization; when associated with A-660; A-679; A-685; A-876; A-980; A-1060; A-1080; A-1120 and A-1210." evidence="31">
    <original>S</original>
    <variation>A</variation>
    <location>
        <position position="742"/>
    </location>
</feature>
<feature type="mutagenesis site" description="In D10 mutant; mimics phosphorylation; does not prevent nuclear localization but induces increased localization to cytoplasmic ribonucleoprotein granules; when associated with D-660, D-679, D-685, D-876, D-980, D-1060, D-1080, D-1120 and D-1210." evidence="31">
    <original>S</original>
    <variation>D</variation>
    <location>
        <position position="742"/>
    </location>
</feature>
<feature type="mutagenesis site" description="In A10 mutant; does not affect nuclear localization; when associated with A-660; A-679; A-685; A-742; A-980; A-1060; A-1080; A-1120 and A-1210." evidence="31">
    <original>S</original>
    <variation>A</variation>
    <location>
        <position position="876"/>
    </location>
</feature>
<feature type="mutagenesis site" description="In D10 mutant; mimics phosphorylation; does not prevent nuclear localization but induces increased localization to cytoplasmic ribonucleoprotein granules; when associated with D-660, D-679, D-685, D-742, D-980, D-1060, D-1080, D-1120 and D-1210." evidence="31">
    <original>S</original>
    <variation>D</variation>
    <location>
        <position position="876"/>
    </location>
</feature>
<feature type="mutagenesis site" description="In A10 mutant; does not affect nuclear localization; when associated with A-660; A-679; A-685; A-742; A-876; A-1060; A-1080; A-1120 and A-1210." evidence="31">
    <original>S</original>
    <variation>A</variation>
    <location>
        <position position="980"/>
    </location>
</feature>
<feature type="mutagenesis site" description="In D10 mutant; mimics phosphorylation; does not prevent nuclear localization but induces increased localization to cytoplasmic ribonucleoprotein granules; when associated with D-660, D-679, D-685, D-742, D-876, D-1060, D-1080, D-1120 and D-1210." evidence="31">
    <original>S</original>
    <variation>D</variation>
    <location>
        <position position="980"/>
    </location>
</feature>
<feature type="mutagenesis site" description="In A10 mutant; does not affect nuclear localization; when associated with A-660; A-679; A-685; A-742; A-876; A-980; A-1080; A-1120 and A-1210." evidence="31">
    <original>S</original>
    <variation>A</variation>
    <location>
        <position position="1060"/>
    </location>
</feature>
<feature type="mutagenesis site" description="In D10 mutant; mimics phosphorylation; does not prevent nuclear localization but induces increased localization to cytoplasmic ribonucleoprotein granules; when associated with D-660, D-679, D-685, D-742, D-876, D-980, D-1080, D-1120 and D-1210." evidence="31">
    <original>S</original>
    <variation>D</variation>
    <location>
        <position position="1060"/>
    </location>
</feature>
<feature type="mutagenesis site" description="In A10 mutant; does not affect nuclear localization; when associated with A-660; A-679; A-685; A-742; A-876; A-980; A-1060; A-1120 and A-1210." evidence="31">
    <original>S</original>
    <variation>A</variation>
    <location>
        <position position="1080"/>
    </location>
</feature>
<feature type="mutagenesis site" description="In D10 mutant; mimics phosphorylation; does not prevent nuclear localization but induces increased localization to cytoplasmic ribonucleoprotein granules; when associated with D-660, D-679, D-685, D-742, D-876, D-980, D-1060, D-1120 and D-1210." evidence="31">
    <original>S</original>
    <variation>D</variation>
    <location>
        <position position="1080"/>
    </location>
</feature>
<feature type="mutagenesis site" description="In A10 mutant; does not affect nuclear localization; when associated with A-660; A-679; A-685; A-742; A-876; A-980; A-1060; A-1080 and A-1210." evidence="31">
    <original>S</original>
    <variation>A</variation>
    <location>
        <position position="1120"/>
    </location>
</feature>
<feature type="mutagenesis site" description="In D10 mutant; mimics phosphorylation; does not prevent nuclear localization but induces increased localization to cytoplasmic ribonucleoprotein granules; when associated with D-660, D-679, D-685, D-742, D-876, D-980, D-1060, D-1080 and D-1210." evidence="31">
    <original>S</original>
    <variation>D</variation>
    <location>
        <position position="1120"/>
    </location>
</feature>
<feature type="mutagenesis site" description="In A10 mutant; does not affect nuclear localization; when associated with A-660; A-679; A-685; A-742; A-876; A-980; A-1060; A-1080 and A-1120." evidence="31">
    <original>S</original>
    <variation>A</variation>
    <location>
        <position position="1210"/>
    </location>
</feature>
<feature type="mutagenesis site" description="In D10 mutant; mimics phosphorylation; does not prevent nuclear localization but induces increased localization to cytoplasmic ribonucleoprotein granules; when associated with D-660, D-679, D-685, D-742, D-876, D-980, D-1060, D-1080 and D-1120." evidence="31">
    <original>S</original>
    <variation>D</variation>
    <location>
        <position position="1210"/>
    </location>
</feature>
<reference key="1">
    <citation type="journal article" date="2012" name="Nat. Med.">
        <title>RBM20, a gene for hereditary cardiomyopathy, regulates titin splicing.</title>
        <authorList>
            <person name="Guo W."/>
            <person name="Schafer S."/>
            <person name="Greaser M.L."/>
            <person name="Radke M.H."/>
            <person name="Liss M."/>
            <person name="Govindarajan T."/>
            <person name="Maatz H."/>
            <person name="Schulz H."/>
            <person name="Li S."/>
            <person name="Parrish A.M."/>
            <person name="Dauksaite V."/>
            <person name="Vakeel P."/>
            <person name="Klaassen S."/>
            <person name="Gerull B."/>
            <person name="Thierfelder L."/>
            <person name="Regitz-Zagrosek V."/>
            <person name="Hacker T.A."/>
            <person name="Saupe K.W."/>
            <person name="Dec G.W."/>
            <person name="Ellinor P.T."/>
            <person name="MacRae C.A."/>
            <person name="Spallek B."/>
            <person name="Fischer R."/>
            <person name="Perrot A."/>
            <person name="Ozcelik C."/>
            <person name="Saar K."/>
            <person name="Hubner N."/>
            <person name="Gotthardt M."/>
        </authorList>
    </citation>
    <scope>NUCLEOTIDE SEQUENCE [MRNA]</scope>
    <scope>FUNCTION</scope>
    <scope>VARIANT CMD1DD ALA-635</scope>
    <scope>CHARACTERIZATION OF VARIANT CMD1DD ALA-635</scope>
</reference>
<reference key="2">
    <citation type="journal article" date="2004" name="Nature">
        <title>The DNA sequence and comparative analysis of human chromosome 10.</title>
        <authorList>
            <person name="Deloukas P."/>
            <person name="Earthrowl M.E."/>
            <person name="Grafham D.V."/>
            <person name="Rubenfield M."/>
            <person name="French L."/>
            <person name="Steward C.A."/>
            <person name="Sims S.K."/>
            <person name="Jones M.C."/>
            <person name="Searle S."/>
            <person name="Scott C."/>
            <person name="Howe K."/>
            <person name="Hunt S.E."/>
            <person name="Andrews T.D."/>
            <person name="Gilbert J.G.R."/>
            <person name="Swarbreck D."/>
            <person name="Ashurst J.L."/>
            <person name="Taylor A."/>
            <person name="Battles J."/>
            <person name="Bird C.P."/>
            <person name="Ainscough R."/>
            <person name="Almeida J.P."/>
            <person name="Ashwell R.I.S."/>
            <person name="Ambrose K.D."/>
            <person name="Babbage A.K."/>
            <person name="Bagguley C.L."/>
            <person name="Bailey J."/>
            <person name="Banerjee R."/>
            <person name="Bates K."/>
            <person name="Beasley H."/>
            <person name="Bray-Allen S."/>
            <person name="Brown A.J."/>
            <person name="Brown J.Y."/>
            <person name="Burford D.C."/>
            <person name="Burrill W."/>
            <person name="Burton J."/>
            <person name="Cahill P."/>
            <person name="Camire D."/>
            <person name="Carter N.P."/>
            <person name="Chapman J.C."/>
            <person name="Clark S.Y."/>
            <person name="Clarke G."/>
            <person name="Clee C.M."/>
            <person name="Clegg S."/>
            <person name="Corby N."/>
            <person name="Coulson A."/>
            <person name="Dhami P."/>
            <person name="Dutta I."/>
            <person name="Dunn M."/>
            <person name="Faulkner L."/>
            <person name="Frankish A."/>
            <person name="Frankland J.A."/>
            <person name="Garner P."/>
            <person name="Garnett J."/>
            <person name="Gribble S."/>
            <person name="Griffiths C."/>
            <person name="Grocock R."/>
            <person name="Gustafson E."/>
            <person name="Hammond S."/>
            <person name="Harley J.L."/>
            <person name="Hart E."/>
            <person name="Heath P.D."/>
            <person name="Ho T.P."/>
            <person name="Hopkins B."/>
            <person name="Horne J."/>
            <person name="Howden P.J."/>
            <person name="Huckle E."/>
            <person name="Hynds C."/>
            <person name="Johnson C."/>
            <person name="Johnson D."/>
            <person name="Kana A."/>
            <person name="Kay M."/>
            <person name="Kimberley A.M."/>
            <person name="Kershaw J.K."/>
            <person name="Kokkinaki M."/>
            <person name="Laird G.K."/>
            <person name="Lawlor S."/>
            <person name="Lee H.M."/>
            <person name="Leongamornlert D.A."/>
            <person name="Laird G."/>
            <person name="Lloyd C."/>
            <person name="Lloyd D.M."/>
            <person name="Loveland J."/>
            <person name="Lovell J."/>
            <person name="McLaren S."/>
            <person name="McLay K.E."/>
            <person name="McMurray A."/>
            <person name="Mashreghi-Mohammadi M."/>
            <person name="Matthews L."/>
            <person name="Milne S."/>
            <person name="Nickerson T."/>
            <person name="Nguyen M."/>
            <person name="Overton-Larty E."/>
            <person name="Palmer S.A."/>
            <person name="Pearce A.V."/>
            <person name="Peck A.I."/>
            <person name="Pelan S."/>
            <person name="Phillimore B."/>
            <person name="Porter K."/>
            <person name="Rice C.M."/>
            <person name="Rogosin A."/>
            <person name="Ross M.T."/>
            <person name="Sarafidou T."/>
            <person name="Sehra H.K."/>
            <person name="Shownkeen R."/>
            <person name="Skuce C.D."/>
            <person name="Smith M."/>
            <person name="Standring L."/>
            <person name="Sycamore N."/>
            <person name="Tester J."/>
            <person name="Thorpe A."/>
            <person name="Torcasso W."/>
            <person name="Tracey A."/>
            <person name="Tromans A."/>
            <person name="Tsolas J."/>
            <person name="Wall M."/>
            <person name="Walsh J."/>
            <person name="Wang H."/>
            <person name="Weinstock K."/>
            <person name="West A.P."/>
            <person name="Willey D.L."/>
            <person name="Whitehead S.L."/>
            <person name="Wilming L."/>
            <person name="Wray P.W."/>
            <person name="Young L."/>
            <person name="Chen Y."/>
            <person name="Lovering R.C."/>
            <person name="Moschonas N.K."/>
            <person name="Siebert R."/>
            <person name="Fechtel K."/>
            <person name="Bentley D."/>
            <person name="Durbin R.M."/>
            <person name="Hubbard T."/>
            <person name="Doucette-Stamm L."/>
            <person name="Beck S."/>
            <person name="Smith D.R."/>
            <person name="Rogers J."/>
        </authorList>
    </citation>
    <scope>NUCLEOTIDE SEQUENCE [LARGE SCALE GENOMIC DNA]</scope>
</reference>
<reference key="3">
    <citation type="journal article" date="2009" name="J. Am. Coll. Cardiol.">
        <title>Mutations in ribonucleic acid binding protein gene cause familial dilated cardiomyopathy.</title>
        <authorList>
            <person name="Brauch K.M."/>
            <person name="Karst M.L."/>
            <person name="Herron K.J."/>
            <person name="de Andrade M."/>
            <person name="Pellikka P.A."/>
            <person name="Rodeheffer R.J."/>
            <person name="Michels V.V."/>
            <person name="Olson T.M."/>
        </authorList>
    </citation>
    <scope>TISSUE SPECIFICITY</scope>
    <scope>VARIANTS CMD1DD GLN-634; HIS-636; SER-636; GLY-637 AND LEU-638</scope>
</reference>
<reference key="4">
    <citation type="journal article" date="2013" name="FEBS Lett.">
        <title>Identification of nuclear retention domains in the RBM20 protein.</title>
        <authorList>
            <person name="Filippello A."/>
            <person name="Lorenzi P."/>
            <person name="Bergamo E."/>
            <person name="Romanelli M.G."/>
        </authorList>
    </citation>
    <scope>SUBCELLULAR LOCATION</scope>
    <scope>TISSUE SPECIFICITY</scope>
</reference>
<reference key="5">
    <citation type="journal article" date="2013" name="J. Proteome Res.">
        <title>Toward a comprehensive characterization of a human cancer cell phosphoproteome.</title>
        <authorList>
            <person name="Zhou H."/>
            <person name="Di Palma S."/>
            <person name="Preisinger C."/>
            <person name="Peng M."/>
            <person name="Polat A.N."/>
            <person name="Heck A.J."/>
            <person name="Mohammed S."/>
        </authorList>
    </citation>
    <scope>PHOSPHORYLATION [LARGE SCALE ANALYSIS] AT SER-498; SER-679; SER-801; SER-876; SER-980 AND SER-1060</scope>
    <scope>IDENTIFICATION BY MASS SPECTROMETRY [LARGE SCALE ANALYSIS]</scope>
    <source>
        <tissue>Erythroleukemia</tissue>
    </source>
</reference>
<reference key="6">
    <citation type="journal article" date="2014" name="J. Clin. Invest.">
        <title>RNA-binding protein RBM20 represses splicing to orchestrate cardiac pre-mRNA processing.</title>
        <authorList>
            <person name="Maatz H."/>
            <person name="Jens M."/>
            <person name="Liss M."/>
            <person name="Schafer S."/>
            <person name="Heinig M."/>
            <person name="Kirchner M."/>
            <person name="Adami E."/>
            <person name="Rintisch C."/>
            <person name="Dauksaite V."/>
            <person name="Radke M.H."/>
            <person name="Selbach M."/>
            <person name="Barton P.J."/>
            <person name="Cook S.A."/>
            <person name="Rajewsky N."/>
            <person name="Gotthardt M."/>
            <person name="Landthaler M."/>
            <person name="Hubner N."/>
        </authorList>
    </citation>
    <scope>FUNCTION</scope>
    <scope>INTERACTION WITH U1 AND U2 U1 SMALL NUCLEAR RIBONUCLEOPROTEIN COMPLEXES</scope>
</reference>
<reference key="7">
    <citation type="journal article" date="2016" name="Circ. Res.">
        <title>RBM20 regulates circular RNA production from the titin gene.</title>
        <authorList>
            <person name="Khan M.A."/>
            <person name="Reckman Y.J."/>
            <person name="Aufiero S."/>
            <person name="van den Hoogenhof M.M."/>
            <person name="van der Made I."/>
            <person name="Beqqali A."/>
            <person name="Koolbergen D.R."/>
            <person name="Rasmussen T.B."/>
            <person name="van der Velden J."/>
            <person name="Creemers E.E."/>
            <person name="Pinto Y.M."/>
        </authorList>
    </citation>
    <scope>FUNCTION</scope>
</reference>
<reference key="8">
    <citation type="journal article" date="2019" name="Nat. Commun.">
        <title>Dynamics of genome reorganization during human cardiogenesis reveal an RBM20-dependent splicing factory.</title>
        <authorList>
            <person name="Bertero A."/>
            <person name="Fields P.A."/>
            <person name="Ramani V."/>
            <person name="Bonora G."/>
            <person name="Yardimci G.G."/>
            <person name="Reinecke H."/>
            <person name="Pabon L."/>
            <person name="Noble W.S."/>
            <person name="Shendure J."/>
            <person name="Murry C.E."/>
        </authorList>
    </citation>
    <scope>FUNCTION</scope>
</reference>
<reference key="9">
    <citation type="journal article" date="2022" name="Mol. Cell">
        <title>Proteome-wide quantitative RNA-interactome capture identifies phosphorylation sites with regulatory potential in RBM20.</title>
        <authorList>
            <person name="Vieira-Vieira C.H."/>
            <person name="Dauksaite V."/>
            <person name="Sporbert A."/>
            <person name="Gotthardt M."/>
            <person name="Selbach M."/>
        </authorList>
    </citation>
    <scope>FUNCTION</scope>
    <scope>SUBCELLULAR LOCATION</scope>
    <scope>PHOSPHORYLATION AT SER-635 SER-660; SER-679; SER-742; SER-865; SER-876; SER-980; SER-1060; SER-1080; SER-1120 AND SER-1210</scope>
    <scope>CHARACTERIZATION OF VARIANT CMD1DD ALA-635</scope>
    <scope>MUTAGENESIS OF SER-660; SER-679; GLU-685; SER-742; SER-876; SER-980; SER-1060; SER-1080; SER-1120 AND SER-1210</scope>
</reference>
<reference key="10">
    <citation type="journal article" date="2010" name="Clin. Transl. Sci.">
        <title>Identification of novel mutations in RBM20 in patients with dilated cardiomyopathy.</title>
        <authorList>
            <person name="Li D."/>
            <person name="Morales A."/>
            <person name="Gonzalez-Quintana J."/>
            <person name="Norton N."/>
            <person name="Siegfried J.D."/>
            <person name="Hofmeyer M."/>
            <person name="Hershberger R.E."/>
        </authorList>
    </citation>
    <scope>VARIANTS CMD1DD ILE-535; TRP-634; GLN-634; CYS-636; HIS-636 AND GLN-716</scope>
</reference>
<reference key="11">
    <citation type="journal article" date="2011" name="Eur. J. Med. Genet.">
        <title>Clinical and mutational spectrum in a cohort of 105 unrelated patients with dilated cardiomyopathy.</title>
        <authorList>
            <person name="Millat G."/>
            <person name="Bouvagnet P."/>
            <person name="Chevalier P."/>
            <person name="Sebbag L."/>
            <person name="Dulac A."/>
            <person name="Dauphin C."/>
            <person name="Jouk P.S."/>
            <person name="Delrue M.A."/>
            <person name="Thambo J.B."/>
            <person name="Le Metayer P."/>
            <person name="Seronde M.F."/>
            <person name="Faivre L."/>
            <person name="Eicher J.C."/>
            <person name="Rousson R."/>
        </authorList>
    </citation>
    <scope>VARIANT CMD1DD GLY-637</scope>
</reference>
<reference key="12">
    <citation type="journal article" date="2012" name="Heart Rhythm">
        <title>Genetic variation in the alternative splicing regulator RBM20 is associated with dilated cardiomyopathy.</title>
        <authorList>
            <person name="Refaat M.M."/>
            <person name="Lubitz S.A."/>
            <person name="Makino S."/>
            <person name="Islam Z."/>
            <person name="Frangiskakis J.M."/>
            <person name="Mehdi H."/>
            <person name="Gutmann R."/>
            <person name="Zhang M.L."/>
            <person name="Bloom H.L."/>
            <person name="MacRae C.A."/>
            <person name="Dudley S.C."/>
            <person name="Shalaby A.A."/>
            <person name="Weiss R."/>
            <person name="McNamara D.M."/>
            <person name="London B."/>
            <person name="Ellinor P.T."/>
        </authorList>
    </citation>
    <scope>VARIANTS CMD1DD ILE-83; LEU-455; LEU-638; ASN-888; 1031-GLY--LEU-1227 DEL; ARG-1081 AND LYS-1206</scope>
</reference>
<reference key="13">
    <citation type="journal article" date="2013" name="Circ. Cardiovasc. Genet.">
        <title>Whole exome sequencing identifies a causal RBM20 mutation in a large pedigree with familial dilated cardiomyopathy.</title>
        <authorList>
            <person name="Wells Q.S."/>
            <person name="Becker J.R."/>
            <person name="Su Y.R."/>
            <person name="Mosley J.D."/>
            <person name="Weeke P."/>
            <person name="D'Aoust L."/>
            <person name="Ausborn N.L."/>
            <person name="Ramirez A.H."/>
            <person name="Pfotenhauer J.P."/>
            <person name="Naftilan A.J."/>
            <person name="Markham L."/>
            <person name="Exil V."/>
            <person name="Roden D.M."/>
            <person name="Hong C.C."/>
        </authorList>
    </citation>
    <scope>VARIANT CMD1DD HIS-636</scope>
</reference>
<reference key="14">
    <citation type="journal article" date="2016" name="Cardiovasc. Res.">
        <title>A mutation in the glutamate-rich region of RNA-binding motif protein 20 causes dilated cardiomyopathy through missplicing of titin and impaired Frank-Starling mechanism.</title>
        <authorList>
            <person name="Beqqali A."/>
            <person name="Bollen I.A."/>
            <person name="Rasmussen T.B."/>
            <person name="van den Hoogenhof M.M."/>
            <person name="van Deutekom H.W."/>
            <person name="Schafer S."/>
            <person name="Haas J."/>
            <person name="Meder B."/>
            <person name="Soerensen K.E."/>
            <person name="van Oort R.J."/>
            <person name="Mogensen J."/>
            <person name="Hubner N."/>
            <person name="Creemers E.E."/>
            <person name="van der Velden J."/>
            <person name="Pinto Y.M."/>
        </authorList>
    </citation>
    <scope>VARIANT CMD1DD LYS-913</scope>
    <scope>CHARACTERIZATION OF VARIANT CMD1DD LYS-913</scope>
    <scope>FUNCTION</scope>
</reference>
<reference key="15">
    <citation type="journal article" date="2016" name="Hum. Mol. Genet.">
        <title>Modeling structural and functional deficiencies of RBM20 familial dilated cardiomyopathy using human induced pluripotent stem cells.</title>
        <authorList>
            <person name="Wyles S.P."/>
            <person name="Li X."/>
            <person name="Hrstka S.C."/>
            <person name="Reyes S."/>
            <person name="Oommen S."/>
            <person name="Beraldi R."/>
            <person name="Edwards J."/>
            <person name="Terzic A."/>
            <person name="Olson T.M."/>
            <person name="Nelson T.J."/>
        </authorList>
    </citation>
    <scope>VARIANT CMD1DD SER-636</scope>
    <scope>CHARACTERIZATION OF VARIANT CMD1DD SER-636</scope>
    <scope>FUNCTION</scope>
</reference>
<reference key="16">
    <citation type="journal article" date="2018" name="Sci. Rep.">
        <title>Phosphorylation of the RSRSP stretch is critical for splicing regulation by RNA-Binding Motif Protein 20 (RBM20) through nuclear localization.</title>
        <authorList>
            <person name="Murayama R."/>
            <person name="Kimura-Asami M."/>
            <person name="Togo-Ohno M."/>
            <person name="Yamasaki-Kato Y."/>
            <person name="Naruse T.K."/>
            <person name="Yamamoto T."/>
            <person name="Hayashi T."/>
            <person name="Ai T."/>
            <person name="Spoonamore K.G."/>
            <person name="Kovacs R.J."/>
            <person name="Vatta M."/>
            <person name="Iizuka M."/>
            <person name="Saito M."/>
            <person name="Wani S."/>
            <person name="Hiraoka Y."/>
            <person name="Kimura A."/>
            <person name="Kuroyanagi H."/>
        </authorList>
    </citation>
    <scope>VARIANTS CMD1DD TRP-634 AND 1031-GLY--LEU-1227 DEL</scope>
    <scope>CHARACTERIZATION OF VARIANTS CMD1DD TRP-634 AND 1031-GLY--LEU-1227 DEL</scope>
    <scope>FUNCTION</scope>
</reference>
<reference key="17">
    <citation type="journal article" date="2019" name="Circ. Heart Fail.">
        <title>Pathogenic RBM20-variants are associated with a severe disease expression in male patients with dilated cardiomyopathy.</title>
        <authorList>
            <person name="Hey T.M."/>
            <person name="Rasmussen T.B."/>
            <person name="Madsen T."/>
            <person name="Aagaard M.M."/>
            <person name="Harbo M."/>
            <person name="Moelgaard H."/>
            <person name="Moeller J.E."/>
            <person name="Eiskjaer H."/>
            <person name="Mogensen J."/>
        </authorList>
    </citation>
    <scope>VARIANTS CMD1DD VAL-196; TRP-392; GLN-634; HIS-636; SER-636; LEU-638; GLY-674; LYS-913 AND SER-1039</scope>
</reference>
<reference key="18">
    <citation type="journal article" date="2019" name="Circ. Heart Fail.">
        <title>Regional variation in RBM20 causes a highly penetrant arrhythmogenic cardiomyopathy.</title>
        <authorList>
            <person name="Parikh V.N."/>
            <person name="Caleshu C."/>
            <person name="Reuter C."/>
            <person name="Lazzeroni L.C."/>
            <person name="Ingles J."/>
            <person name="Garcia J."/>
            <person name="McCaleb K."/>
            <person name="Adesiyun T."/>
            <person name="Sedaghat-Hamedani F."/>
            <person name="Kumar S."/>
            <person name="Graw S."/>
            <person name="Gigli M."/>
            <person name="Stolfo D."/>
            <person name="Dal Ferro M."/>
            <person name="Ing A.Y."/>
            <person name="Nussbaum R."/>
            <person name="Funke B."/>
            <person name="Wheeler M.T."/>
            <person name="Hershberger R.E."/>
            <person name="Cook S."/>
            <person name="Steinmetz L.M."/>
            <person name="Lakdawala N.K."/>
            <person name="Taylor M.R.G."/>
            <person name="Mestroni L."/>
            <person name="Merlo M."/>
            <person name="Sinagra G."/>
            <person name="Semsarian C."/>
            <person name="Meder B."/>
            <person name="Judge D.P."/>
            <person name="Ashley E."/>
        </authorList>
    </citation>
    <scope>VARIANTS CMD1DD ILE-535 AND GLN-716</scope>
</reference>
<reference key="19">
    <citation type="journal article" date="2019" name="Genet. Med.">
        <title>Functional analysis of DES-p.L398P and RBM20-p.R636C.</title>
        <authorList>
            <person name="Brodehl A."/>
            <person name="Ebbinghaus H."/>
            <person name="Gaertner-Rommel A."/>
            <person name="Stanasiuk C."/>
            <person name="Klauke B."/>
            <person name="Milting H."/>
        </authorList>
    </citation>
    <scope>VARIANT CMD1DD CYS-636</scope>
    <scope>CHARACTERIZATION OF VARIANT CMD1DD CYS-636</scope>
    <scope>SUBCELLULAR LOCATION</scope>
</reference>
<reference key="20">
    <citation type="journal article" date="2020" name="Acta Cardiol.">
        <title>Whole exome sequencing in a large pedigree with DCM identifies a novel mutation in RBM20.</title>
        <authorList>
            <person name="Robyns T."/>
            <person name="Willems R."/>
            <person name="Van Cleemput J."/>
            <person name="Jhangiani S."/>
            <person name="Muzny D."/>
            <person name="Gibbs R."/>
            <person name="Lupski J.R."/>
            <person name="Breckpot J."/>
            <person name="Devriendt K."/>
            <person name="Corveleyn A."/>
        </authorList>
    </citation>
    <scope>VARIANT CMD1DD LYS-905</scope>
</reference>
<reference key="21">
    <citation type="journal article" date="2020" name="Hum. Mutat.">
        <title>Cardiomyopathy-associated mutations in the RS domain affect nuclear localization of RBM20.</title>
        <authorList>
            <person name="Gaertner A."/>
            <person name="Klauke B."/>
            <person name="Felski E."/>
            <person name="Kassner A."/>
            <person name="Brodehl A."/>
            <person name="Gerdes D."/>
            <person name="Stanasiuk C."/>
            <person name="Ebbinghaus H."/>
            <person name="Schulz U."/>
            <person name="Dubowy K.O."/>
            <person name="Tiesmeier J."/>
            <person name="Laser K.T."/>
            <person name="Bante H."/>
            <person name="Bergau L."/>
            <person name="Sommer P."/>
            <person name="Fox H."/>
            <person name="Morshuis M."/>
            <person name="Gummert J."/>
            <person name="Milting H."/>
        </authorList>
    </citation>
    <scope>VARIANTS CMD1DD LEU-638 AND ALA-914</scope>
    <scope>CHARACTERIZATION OF VARIANTS CMD1DD LEU-638 AND ALA-914</scope>
    <scope>SUBCELLULAR LOCATION</scope>
    <scope>FUNCTION</scope>
</reference>
<reference key="22">
    <citation type="journal article" date="2020" name="Nat. Med.">
        <title>Dysregulated ribonucleoprotein granules promote cardiomyopathy in RBM20 gene-edited pigs.</title>
        <authorList>
            <consortium name="Wanek Program Preclinical Pipeline"/>
            <person name="Schneider J.W."/>
            <person name="Oommen S."/>
            <person name="Qureshi M.Y."/>
            <person name="Goetsch S.C."/>
            <person name="Pease D.R."/>
            <person name="Sundsbak R.S."/>
            <person name="Guo W."/>
            <person name="Sun M."/>
            <person name="Sun H."/>
            <person name="Kuroyanagi H."/>
            <person name="Webster D.A."/>
            <person name="Coutts A.W."/>
            <person name="Holst K.A."/>
            <person name="Edwards B.S."/>
            <person name="Newville N."/>
            <person name="Hathcock M.A."/>
            <person name="Melkamu T."/>
            <person name="Briganti F."/>
            <person name="Wei W."/>
            <person name="Romanelli M.G."/>
            <person name="Fahrenkrug S.C."/>
            <person name="Frantz D.E."/>
            <person name="Olson T.M."/>
            <person name="Steinmetz L.M."/>
            <person name="Carlson D.F."/>
            <person name="Nelson T.J."/>
        </authorList>
    </citation>
    <scope>VARIANT CMD1DD SER-636</scope>
    <scope>CHARACTERIZATION OF VARIANT CMD1DD SER-636</scope>
    <scope>SUBCELLULAR LOCATION</scope>
</reference>
<reference key="23">
    <citation type="journal article" date="2020" name="Pediatr. Investig.">
        <title>Whole-exome sequencing reveals two de novo variants in the RBM20 gene in two Chinese patients with left ventricular non-compaction cardiomyopathy.</title>
        <authorList>
            <person name="Sun Q."/>
            <person name="Guo J."/>
            <person name="Hao C."/>
            <person name="Guo R."/>
            <person name="Hu X."/>
            <person name="Chen Y."/>
            <person name="Yang W."/>
            <person name="Li W."/>
            <person name="Feng Y."/>
        </authorList>
    </citation>
    <scope>INVOLVEMENT IN LEFT VENTRICULAR NON-COMPACTION (LVNCX)</scope>
    <scope>VARIANTS HIS-636 AND GLY-637</scope>
</reference>
<reference key="24">
    <citation type="journal article" date="2021" name="Am. J. Cardiovasc. Dis.">
        <title>RBM20 mutation and ventricular arrhythmias in a young patient with dilated cardiomyopathy: a case report.</title>
        <authorList>
            <person name="Liatakis I."/>
            <person name="Prappa E."/>
            <person name="Gouziouta A."/>
            <person name="Pantou M.P."/>
            <person name="Gourzi P."/>
            <person name="Vlachos K."/>
            <person name="Mililis P."/>
            <person name="Kariki O."/>
            <person name="Degiannis D."/>
            <person name="Efremidis M."/>
            <person name="Letsas K.P."/>
        </authorList>
    </citation>
    <scope>VARIANT CMD1DD TRP-634</scope>
</reference>
<reference key="25">
    <citation type="journal article" date="2021" name="Egypt Heart J.">
        <title>Familial dilated cardiomyopathy with RBM20 mutation in an Indian patient: a case report.</title>
        <authorList>
            <person name="Das S."/>
            <person name="Seth S."/>
        </authorList>
    </citation>
    <scope>VARIANT CMD1DD TRP-634</scope>
</reference>
<reference key="26">
    <citation type="journal article" date="2021" name="Eur. J. Med. Genet.">
        <title>Phenotype and progression among patients with dilated cardiomyopathy and RBM20 mutations.</title>
        <authorList>
            <person name="Robles-Mezcua A."/>
            <person name="Rodriguez-Miranda L."/>
            <person name="Morcillo-Hidalgo L."/>
            <person name="Jimenez-Navarro M."/>
            <person name="Garcia-Pinilla J.M."/>
        </authorList>
    </citation>
    <scope>VARIANTS CMD1DD THR-52; SER-177; LEU-194; VAL-259; PRO-598 AND TRP-1057</scope>
</reference>
<reference key="27">
    <citation type="journal article" date="2021" name="Nat. Commun.">
        <title>Gain-of-function cardiomyopathic mutations in RBM20 rewire splicing regulation and re-distribute ribonucleoprotein granules within processing bodies.</title>
        <authorList>
            <person name="Fenix A.M."/>
            <person name="Miyaoka Y."/>
            <person name="Bertero A."/>
            <person name="Blue S.M."/>
            <person name="Spindler M.J."/>
            <person name="Tan K.K.B."/>
            <person name="Perez-Bermejo J.A."/>
            <person name="Chan A.H."/>
            <person name="Mayerl S.J."/>
            <person name="Nguyen T.D."/>
            <person name="Russell C.R."/>
            <person name="Lizarraga P.P."/>
            <person name="Truong A."/>
            <person name="So P.L."/>
            <person name="Kulkarni A."/>
            <person name="Chetal K."/>
            <person name="Sathe S."/>
            <person name="Sniadecki N.J."/>
            <person name="Yeo G.W."/>
            <person name="Murry C.E."/>
            <person name="Conklin B.R."/>
            <person name="Salomonis N."/>
        </authorList>
    </citation>
    <scope>VARIANT CMD1DD SER-636</scope>
    <scope>CHARACTERIZATION OF VARIANT CMD1DD SER-636</scope>
    <scope>FUNCTION</scope>
    <scope>SUBCELLULAR LOCATION</scope>
</reference>